<gene>
    <name type="ordered locus">BPSL2143</name>
</gene>
<comment type="function">
    <text evidence="1">Bifunctional serine/threonine kinase and phosphorylase involved in the regulation of the phosphoenolpyruvate synthase (PEPS) by catalyzing its phosphorylation/dephosphorylation.</text>
</comment>
<comment type="catalytic activity">
    <reaction evidence="1">
        <text>[pyruvate, water dikinase] + ADP = [pyruvate, water dikinase]-phosphate + AMP + H(+)</text>
        <dbReference type="Rhea" id="RHEA:46020"/>
        <dbReference type="Rhea" id="RHEA-COMP:11425"/>
        <dbReference type="Rhea" id="RHEA-COMP:11426"/>
        <dbReference type="ChEBI" id="CHEBI:15378"/>
        <dbReference type="ChEBI" id="CHEBI:43176"/>
        <dbReference type="ChEBI" id="CHEBI:68546"/>
        <dbReference type="ChEBI" id="CHEBI:456215"/>
        <dbReference type="ChEBI" id="CHEBI:456216"/>
        <dbReference type="EC" id="2.7.11.33"/>
    </reaction>
</comment>
<comment type="catalytic activity">
    <reaction evidence="1">
        <text>[pyruvate, water dikinase]-phosphate + phosphate + H(+) = [pyruvate, water dikinase] + diphosphate</text>
        <dbReference type="Rhea" id="RHEA:48580"/>
        <dbReference type="Rhea" id="RHEA-COMP:11425"/>
        <dbReference type="Rhea" id="RHEA-COMP:11426"/>
        <dbReference type="ChEBI" id="CHEBI:15378"/>
        <dbReference type="ChEBI" id="CHEBI:33019"/>
        <dbReference type="ChEBI" id="CHEBI:43176"/>
        <dbReference type="ChEBI" id="CHEBI:43474"/>
        <dbReference type="ChEBI" id="CHEBI:68546"/>
        <dbReference type="EC" id="2.7.4.28"/>
    </reaction>
</comment>
<comment type="similarity">
    <text evidence="1">Belongs to the pyruvate, phosphate/water dikinase regulatory protein family. PSRP subfamily.</text>
</comment>
<evidence type="ECO:0000255" key="1">
    <source>
        <dbReference type="HAMAP-Rule" id="MF_01062"/>
    </source>
</evidence>
<proteinExistence type="inferred from homology"/>
<accession>Q63T28</accession>
<keyword id="KW-0418">Kinase</keyword>
<keyword id="KW-0547">Nucleotide-binding</keyword>
<keyword id="KW-1185">Reference proteome</keyword>
<keyword id="KW-0723">Serine/threonine-protein kinase</keyword>
<keyword id="KW-0808">Transferase</keyword>
<reference key="1">
    <citation type="journal article" date="2004" name="Proc. Natl. Acad. Sci. U.S.A.">
        <title>Genomic plasticity of the causative agent of melioidosis, Burkholderia pseudomallei.</title>
        <authorList>
            <person name="Holden M.T.G."/>
            <person name="Titball R.W."/>
            <person name="Peacock S.J."/>
            <person name="Cerdeno-Tarraga A.-M."/>
            <person name="Atkins T."/>
            <person name="Crossman L.C."/>
            <person name="Pitt T."/>
            <person name="Churcher C."/>
            <person name="Mungall K.L."/>
            <person name="Bentley S.D."/>
            <person name="Sebaihia M."/>
            <person name="Thomson N.R."/>
            <person name="Bason N."/>
            <person name="Beacham I.R."/>
            <person name="Brooks K."/>
            <person name="Brown K.A."/>
            <person name="Brown N.F."/>
            <person name="Challis G.L."/>
            <person name="Cherevach I."/>
            <person name="Chillingworth T."/>
            <person name="Cronin A."/>
            <person name="Crossett B."/>
            <person name="Davis P."/>
            <person name="DeShazer D."/>
            <person name="Feltwell T."/>
            <person name="Fraser A."/>
            <person name="Hance Z."/>
            <person name="Hauser H."/>
            <person name="Holroyd S."/>
            <person name="Jagels K."/>
            <person name="Keith K.E."/>
            <person name="Maddison M."/>
            <person name="Moule S."/>
            <person name="Price C."/>
            <person name="Quail M.A."/>
            <person name="Rabbinowitsch E."/>
            <person name="Rutherford K."/>
            <person name="Sanders M."/>
            <person name="Simmonds M."/>
            <person name="Songsivilai S."/>
            <person name="Stevens K."/>
            <person name="Tumapa S."/>
            <person name="Vesaratchavest M."/>
            <person name="Whitehead S."/>
            <person name="Yeats C."/>
            <person name="Barrell B.G."/>
            <person name="Oyston P.C.F."/>
            <person name="Parkhill J."/>
        </authorList>
    </citation>
    <scope>NUCLEOTIDE SEQUENCE [LARGE SCALE GENOMIC DNA]</scope>
    <source>
        <strain>K96243</strain>
    </source>
</reference>
<sequence>MLPTVFIVSDGTGITAETFAHSILSQFDQKFRLVRVPFIDSIEKAYDTVRKINDAAQHDGRRPIVFTTLVDGESNEIVKRSNALVLDMFQRFVEPLEQELQLKSSHAMGRVHQNADTEEYKTRIEAINFSLAHDDGQSNRNLADADVILIGVSRSGKTPTSLYLAMQYGVKAANYPLIPEDFERGKLPTPLHPHRDKLFGLSIDPMRLSEIRNERRPGSKYAAPENCRYEINEAEAMMRREGVKWLSSTHKSIEEIATTILQEIKLERQSY</sequence>
<organism>
    <name type="scientific">Burkholderia pseudomallei (strain K96243)</name>
    <dbReference type="NCBI Taxonomy" id="272560"/>
    <lineage>
        <taxon>Bacteria</taxon>
        <taxon>Pseudomonadati</taxon>
        <taxon>Pseudomonadota</taxon>
        <taxon>Betaproteobacteria</taxon>
        <taxon>Burkholderiales</taxon>
        <taxon>Burkholderiaceae</taxon>
        <taxon>Burkholderia</taxon>
        <taxon>pseudomallei group</taxon>
    </lineage>
</organism>
<name>PSRP_BURPS</name>
<feature type="chain" id="PRO_0000196642" description="Putative phosphoenolpyruvate synthase regulatory protein">
    <location>
        <begin position="1"/>
        <end position="271"/>
    </location>
</feature>
<feature type="binding site" evidence="1">
    <location>
        <begin position="151"/>
        <end position="158"/>
    </location>
    <ligand>
        <name>ADP</name>
        <dbReference type="ChEBI" id="CHEBI:456216"/>
    </ligand>
</feature>
<dbReference type="EC" id="2.7.11.33" evidence="1"/>
<dbReference type="EC" id="2.7.4.28" evidence="1"/>
<dbReference type="EMBL" id="BX571965">
    <property type="protein sequence ID" value="CAH36145.1"/>
    <property type="molecule type" value="Genomic_DNA"/>
</dbReference>
<dbReference type="RefSeq" id="WP_004192738.1">
    <property type="nucleotide sequence ID" value="NZ_CP009538.1"/>
</dbReference>
<dbReference type="RefSeq" id="YP_108738.1">
    <property type="nucleotide sequence ID" value="NC_006350.1"/>
</dbReference>
<dbReference type="SMR" id="Q63T28"/>
<dbReference type="STRING" id="272560.BPSL2143"/>
<dbReference type="KEGG" id="bps:BPSL2143"/>
<dbReference type="PATRIC" id="fig|272560.51.peg.3310"/>
<dbReference type="eggNOG" id="COG1806">
    <property type="taxonomic scope" value="Bacteria"/>
</dbReference>
<dbReference type="Proteomes" id="UP000000605">
    <property type="component" value="Chromosome 1"/>
</dbReference>
<dbReference type="GO" id="GO:0043531">
    <property type="term" value="F:ADP binding"/>
    <property type="evidence" value="ECO:0007669"/>
    <property type="project" value="UniProtKB-UniRule"/>
</dbReference>
<dbReference type="GO" id="GO:0005524">
    <property type="term" value="F:ATP binding"/>
    <property type="evidence" value="ECO:0007669"/>
    <property type="project" value="InterPro"/>
</dbReference>
<dbReference type="GO" id="GO:0016776">
    <property type="term" value="F:phosphotransferase activity, phosphate group as acceptor"/>
    <property type="evidence" value="ECO:0007669"/>
    <property type="project" value="UniProtKB-UniRule"/>
</dbReference>
<dbReference type="GO" id="GO:0004674">
    <property type="term" value="F:protein serine/threonine kinase activity"/>
    <property type="evidence" value="ECO:0007669"/>
    <property type="project" value="UniProtKB-UniRule"/>
</dbReference>
<dbReference type="HAMAP" id="MF_01062">
    <property type="entry name" value="PSRP"/>
    <property type="match status" value="1"/>
</dbReference>
<dbReference type="InterPro" id="IPR005177">
    <property type="entry name" value="Kinase-pyrophosphorylase"/>
</dbReference>
<dbReference type="InterPro" id="IPR026530">
    <property type="entry name" value="PSRP"/>
</dbReference>
<dbReference type="NCBIfam" id="NF003742">
    <property type="entry name" value="PRK05339.1"/>
    <property type="match status" value="1"/>
</dbReference>
<dbReference type="PANTHER" id="PTHR31756">
    <property type="entry name" value="PYRUVATE, PHOSPHATE DIKINASE REGULATORY PROTEIN 1, CHLOROPLASTIC"/>
    <property type="match status" value="1"/>
</dbReference>
<dbReference type="PANTHER" id="PTHR31756:SF3">
    <property type="entry name" value="PYRUVATE, PHOSPHATE DIKINASE REGULATORY PROTEIN 1, CHLOROPLASTIC"/>
    <property type="match status" value="1"/>
</dbReference>
<dbReference type="Pfam" id="PF03618">
    <property type="entry name" value="Kinase-PPPase"/>
    <property type="match status" value="1"/>
</dbReference>
<protein>
    <recommendedName>
        <fullName evidence="1">Putative phosphoenolpyruvate synthase regulatory protein</fullName>
        <shortName evidence="1">PEP synthase regulatory protein</shortName>
        <shortName evidence="1">PSRP</shortName>
        <ecNumber evidence="1">2.7.11.33</ecNumber>
        <ecNumber evidence="1">2.7.4.28</ecNumber>
    </recommendedName>
    <alternativeName>
        <fullName evidence="1">Pyruvate, water dikinase regulatory protein</fullName>
    </alternativeName>
</protein>